<keyword id="KW-0963">Cytoplasm</keyword>
<keyword id="KW-0396">Initiation factor</keyword>
<keyword id="KW-0597">Phosphoprotein</keyword>
<keyword id="KW-0648">Protein biosynthesis</keyword>
<keyword id="KW-1185">Reference proteome</keyword>
<keyword id="KW-0694">RNA-binding</keyword>
<sequence length="293" mass="32844">MPSIEFDDSKPSWADQVEEEGDEGSLPSPKETVKGNIKTVTEYKIDDDGQKFKIIRTFKIETRKASKAVARRKNWKKFGNSEYDAPGPNVATTTVSDDVFMTFISSKEDLNAQDQDEDPMNKLKGQKIVSCRICKGDHWTTRCPYKDTLGPMQKELAEQLGLSTGEKEKAAEPEPAQPVQNKTGKYVPPSLRDGGTRRGESMQPNRRADDNATIRVTNLSEDTRETDLQELFRPFGSISRIYLAKDKNTGQSKGFAFISFHRREDAARAIAGVSGFGYDHLILNVEWAKPSNN</sequence>
<comment type="function">
    <text evidence="1">RNA-binding component of the eukaryotic translation initiation factor 3 (eIF-3) complex, which is involved in protein synthesis of a specialized repertoire of mRNAs and, together with other initiation factors, stimulates binding of mRNA and methionyl-tRNAi to the 40S ribosome. The eIF-3 complex specifically targets and initiates translation of a subset of mRNAs involved in cell proliferation. This subunit can bind 18S rRNA.</text>
</comment>
<comment type="subunit">
    <text evidence="1">Component of the eukaryotic translation initiation factor 3 (eIF-3) complex, which is composed of 13 subunits: eif3a, eif3b, eif3c, eif3d, eif3e, eif3f, eif3g, eif3h, eif3i, eif3j, eif3k, eif3l and eif3m.</text>
</comment>
<comment type="subcellular location">
    <subcellularLocation>
        <location evidence="1">Cytoplasm</location>
    </subcellularLocation>
</comment>
<comment type="similarity">
    <text evidence="1">Belongs to the eIF-3 subunit G family.</text>
</comment>
<comment type="sequence caution" evidence="3">
    <conflict type="frameshift">
        <sequence resource="EMBL-CDS" id="AAI53490"/>
    </conflict>
</comment>
<feature type="chain" id="PRO_0000365397" description="Eukaryotic translation initiation factor 3 subunit G">
    <location>
        <begin position="1"/>
        <end position="293"/>
    </location>
</feature>
<feature type="domain" description="RRM" evidence="1">
    <location>
        <begin position="212"/>
        <end position="290"/>
    </location>
</feature>
<feature type="region of interest" description="Disordered" evidence="2">
    <location>
        <begin position="1"/>
        <end position="32"/>
    </location>
</feature>
<feature type="region of interest" description="Disordered" evidence="2">
    <location>
        <begin position="163"/>
        <end position="206"/>
    </location>
</feature>
<feature type="compositionally biased region" description="Basic and acidic residues" evidence="2">
    <location>
        <begin position="194"/>
        <end position="206"/>
    </location>
</feature>
<feature type="sequence conflict" description="In Ref. 2; AAH49046." evidence="3" ref="2">
    <original>K</original>
    <variation>E</variation>
    <location>
        <position position="124"/>
    </location>
</feature>
<feature type="sequence conflict" description="In Ref. 2; AAH49046." evidence="3" ref="2">
    <original>F</original>
    <variation>L</variation>
    <location>
        <position position="257"/>
    </location>
</feature>
<organism>
    <name type="scientific">Danio rerio</name>
    <name type="common">Zebrafish</name>
    <name type="synonym">Brachydanio rerio</name>
    <dbReference type="NCBI Taxonomy" id="7955"/>
    <lineage>
        <taxon>Eukaryota</taxon>
        <taxon>Metazoa</taxon>
        <taxon>Chordata</taxon>
        <taxon>Craniata</taxon>
        <taxon>Vertebrata</taxon>
        <taxon>Euteleostomi</taxon>
        <taxon>Actinopterygii</taxon>
        <taxon>Neopterygii</taxon>
        <taxon>Teleostei</taxon>
        <taxon>Ostariophysi</taxon>
        <taxon>Cypriniformes</taxon>
        <taxon>Danionidae</taxon>
        <taxon>Danioninae</taxon>
        <taxon>Danio</taxon>
    </lineage>
</organism>
<proteinExistence type="evidence at protein level"/>
<accession>Q6DRC4</accession>
<accession>A8E573</accession>
<accession>Q7ZUH3</accession>
<dbReference type="EMBL" id="AY648835">
    <property type="protein sequence ID" value="AAT68153.1"/>
    <property type="molecule type" value="mRNA"/>
</dbReference>
<dbReference type="EMBL" id="BC049046">
    <property type="protein sequence ID" value="AAH49046.1"/>
    <property type="molecule type" value="mRNA"/>
</dbReference>
<dbReference type="EMBL" id="BC153489">
    <property type="protein sequence ID" value="AAI53490.1"/>
    <property type="status" value="ALT_FRAME"/>
    <property type="molecule type" value="mRNA"/>
</dbReference>
<dbReference type="RefSeq" id="NP_957293.1">
    <property type="nucleotide sequence ID" value="NM_200999.1"/>
</dbReference>
<dbReference type="SMR" id="Q6DRC4"/>
<dbReference type="FunCoup" id="Q6DRC4">
    <property type="interactions" value="2606"/>
</dbReference>
<dbReference type="STRING" id="7955.ENSDARP00000027672"/>
<dbReference type="PaxDb" id="7955-ENSDARP00000027672"/>
<dbReference type="Ensembl" id="ENSDART00000018071">
    <property type="protein sequence ID" value="ENSDARP00000027672"/>
    <property type="gene ID" value="ENSDARG00000016889"/>
</dbReference>
<dbReference type="GeneID" id="393974"/>
<dbReference type="KEGG" id="dre:393974"/>
<dbReference type="AGR" id="ZFIN:ZDB-GENE-040426-1076"/>
<dbReference type="CTD" id="8666"/>
<dbReference type="ZFIN" id="ZDB-GENE-040426-1076">
    <property type="gene designation" value="eif3g"/>
</dbReference>
<dbReference type="eggNOG" id="KOG0122">
    <property type="taxonomic scope" value="Eukaryota"/>
</dbReference>
<dbReference type="HOGENOM" id="CLU_034595_0_0_1"/>
<dbReference type="InParanoid" id="Q6DRC4"/>
<dbReference type="OMA" id="ICQGDHF"/>
<dbReference type="OrthoDB" id="1749473at2759"/>
<dbReference type="PhylomeDB" id="Q6DRC4"/>
<dbReference type="TreeFam" id="TF101516"/>
<dbReference type="Reactome" id="R-DRE-156827">
    <property type="pathway name" value="L13a-mediated translational silencing of Ceruloplasmin expression"/>
</dbReference>
<dbReference type="Reactome" id="R-DRE-72689">
    <property type="pathway name" value="Formation of a pool of free 40S subunits"/>
</dbReference>
<dbReference type="Reactome" id="R-DRE-72695">
    <property type="pathway name" value="Formation of the ternary complex, and subsequently, the 43S complex"/>
</dbReference>
<dbReference type="Reactome" id="R-DRE-72702">
    <property type="pathway name" value="Ribosomal scanning and start codon recognition"/>
</dbReference>
<dbReference type="PRO" id="PR:Q6DRC4"/>
<dbReference type="Proteomes" id="UP000000437">
    <property type="component" value="Chromosome 3"/>
</dbReference>
<dbReference type="Bgee" id="ENSDARG00000016889">
    <property type="expression patterns" value="Expressed in somite and 30 other cell types or tissues"/>
</dbReference>
<dbReference type="GO" id="GO:0016282">
    <property type="term" value="C:eukaryotic 43S preinitiation complex"/>
    <property type="evidence" value="ECO:0007669"/>
    <property type="project" value="UniProtKB-UniRule"/>
</dbReference>
<dbReference type="GO" id="GO:0033290">
    <property type="term" value="C:eukaryotic 48S preinitiation complex"/>
    <property type="evidence" value="ECO:0007669"/>
    <property type="project" value="UniProtKB-UniRule"/>
</dbReference>
<dbReference type="GO" id="GO:0005852">
    <property type="term" value="C:eukaryotic translation initiation factor 3 complex"/>
    <property type="evidence" value="ECO:0000250"/>
    <property type="project" value="UniProtKB"/>
</dbReference>
<dbReference type="GO" id="GO:0003723">
    <property type="term" value="F:RNA binding"/>
    <property type="evidence" value="ECO:0007669"/>
    <property type="project" value="UniProtKB-UniRule"/>
</dbReference>
<dbReference type="GO" id="GO:0003743">
    <property type="term" value="F:translation initiation factor activity"/>
    <property type="evidence" value="ECO:0007669"/>
    <property type="project" value="UniProtKB-UniRule"/>
</dbReference>
<dbReference type="GO" id="GO:0001732">
    <property type="term" value="P:formation of cytoplasmic translation initiation complex"/>
    <property type="evidence" value="ECO:0007669"/>
    <property type="project" value="UniProtKB-UniRule"/>
</dbReference>
<dbReference type="GO" id="GO:0006413">
    <property type="term" value="P:translational initiation"/>
    <property type="evidence" value="ECO:0000250"/>
    <property type="project" value="UniProtKB"/>
</dbReference>
<dbReference type="CDD" id="cd12933">
    <property type="entry name" value="eIF3G"/>
    <property type="match status" value="1"/>
</dbReference>
<dbReference type="CDD" id="cd12408">
    <property type="entry name" value="RRM_eIF3G_like"/>
    <property type="match status" value="1"/>
</dbReference>
<dbReference type="FunFam" id="3.30.70.330:FF:000194">
    <property type="entry name" value="Eukaryotic translation initiation factor 3 subunit G"/>
    <property type="match status" value="1"/>
</dbReference>
<dbReference type="Gene3D" id="3.30.70.330">
    <property type="match status" value="1"/>
</dbReference>
<dbReference type="HAMAP" id="MF_03006">
    <property type="entry name" value="eIF3g"/>
    <property type="match status" value="1"/>
</dbReference>
<dbReference type="InterPro" id="IPR017334">
    <property type="entry name" value="eIF3_g"/>
</dbReference>
<dbReference type="InterPro" id="IPR024675">
    <property type="entry name" value="eIF3g_N"/>
</dbReference>
<dbReference type="InterPro" id="IPR034240">
    <property type="entry name" value="eIF3G_RRM"/>
</dbReference>
<dbReference type="InterPro" id="IPR012677">
    <property type="entry name" value="Nucleotide-bd_a/b_plait_sf"/>
</dbReference>
<dbReference type="InterPro" id="IPR035979">
    <property type="entry name" value="RBD_domain_sf"/>
</dbReference>
<dbReference type="InterPro" id="IPR000504">
    <property type="entry name" value="RRM_dom"/>
</dbReference>
<dbReference type="PANTHER" id="PTHR10352">
    <property type="entry name" value="EUKARYOTIC TRANSLATION INITIATION FACTOR 3 SUBUNIT G"/>
    <property type="match status" value="1"/>
</dbReference>
<dbReference type="Pfam" id="PF12353">
    <property type="entry name" value="eIF3g"/>
    <property type="match status" value="1"/>
</dbReference>
<dbReference type="Pfam" id="PF00076">
    <property type="entry name" value="RRM_1"/>
    <property type="match status" value="1"/>
</dbReference>
<dbReference type="PIRSF" id="PIRSF037949">
    <property type="entry name" value="Transl_init_eIF-3_RNA-bind"/>
    <property type="match status" value="1"/>
</dbReference>
<dbReference type="SMART" id="SM00360">
    <property type="entry name" value="RRM"/>
    <property type="match status" value="1"/>
</dbReference>
<dbReference type="SUPFAM" id="SSF54928">
    <property type="entry name" value="RNA-binding domain, RBD"/>
    <property type="match status" value="1"/>
</dbReference>
<dbReference type="PROSITE" id="PS50102">
    <property type="entry name" value="RRM"/>
    <property type="match status" value="1"/>
</dbReference>
<reference key="1">
    <citation type="journal article" date="2004" name="Proc. Natl. Acad. Sci. U.S.A.">
        <title>Identification of 315 genes essential for early zebrafish development.</title>
        <authorList>
            <person name="Amsterdam A."/>
            <person name="Nissen R.M."/>
            <person name="Sun Z."/>
            <person name="Swindell E.C."/>
            <person name="Farrington S."/>
            <person name="Hopkins N."/>
        </authorList>
    </citation>
    <scope>NUCLEOTIDE SEQUENCE [LARGE SCALE MRNA]</scope>
    <source>
        <tissue>Embryo</tissue>
    </source>
</reference>
<reference key="2">
    <citation type="submission" date="2003-03" db="EMBL/GenBank/DDBJ databases">
        <authorList>
            <consortium name="NIH - Zebrafish Gene Collection (ZGC) project"/>
        </authorList>
    </citation>
    <scope>NUCLEOTIDE SEQUENCE [LARGE SCALE MRNA]</scope>
    <source>
        <tissue>Olfactory epithelium</tissue>
    </source>
</reference>
<reference key="3">
    <citation type="journal article" date="2008" name="J. Proteome Res.">
        <title>Online automated in vivo zebrafish phosphoproteomics: from large-scale analysis down to a single embryo.</title>
        <authorList>
            <person name="Lemeer S."/>
            <person name="Pinkse M.W.H."/>
            <person name="Mohammed S."/>
            <person name="van Breukelen B."/>
            <person name="den Hertog J."/>
            <person name="Slijper M."/>
            <person name="Heck A.J.R."/>
        </authorList>
    </citation>
    <scope>PHOSPHORYLATION [LARGE SCALE ANALYSIS]</scope>
    <scope>IDENTIFICATION BY MASS SPECTROMETRY</scope>
    <source>
        <tissue>Embryo</tissue>
    </source>
</reference>
<evidence type="ECO:0000255" key="1">
    <source>
        <dbReference type="HAMAP-Rule" id="MF_03006"/>
    </source>
</evidence>
<evidence type="ECO:0000256" key="2">
    <source>
        <dbReference type="SAM" id="MobiDB-lite"/>
    </source>
</evidence>
<evidence type="ECO:0000305" key="3"/>
<name>EIF3G_DANRE</name>
<gene>
    <name type="primary">eif3g</name>
    <name type="synonym">eif3s4</name>
</gene>
<protein>
    <recommendedName>
        <fullName evidence="1">Eukaryotic translation initiation factor 3 subunit G</fullName>
        <shortName evidence="1">eIF3g</shortName>
    </recommendedName>
    <alternativeName>
        <fullName evidence="1">Eukaryotic translation initiation factor 3 RNA-binding subunit</fullName>
        <shortName evidence="1">eIF-3 RNA-binding subunit</shortName>
    </alternativeName>
    <alternativeName>
        <fullName evidence="1">Eukaryotic translation initiation factor 3 subunit 4</fullName>
    </alternativeName>
</protein>